<gene>
    <name type="primary">POU3F3</name>
    <name type="synonym">BRN1</name>
</gene>
<accession>Q29087</accession>
<reference key="1">
    <citation type="submission" date="1994-04" db="EMBL/GenBank/DDBJ databases">
        <authorList>
            <person name="Woollard J."/>
            <person name="Schmitz C.B."/>
            <person name="Tuggle C.K."/>
        </authorList>
    </citation>
    <scope>NUCLEOTIDE SEQUENCE [MRNA]</scope>
    <source>
        <tissue>Hypothalamus</tissue>
    </source>
</reference>
<name>PO3F3_PIG</name>
<evidence type="ECO:0000250" key="1">
    <source>
        <dbReference type="UniProtKB" id="P20264"/>
    </source>
</evidence>
<evidence type="ECO:0000250" key="2">
    <source>
        <dbReference type="UniProtKB" id="P31361"/>
    </source>
</evidence>
<evidence type="ECO:0000250" key="3">
    <source>
        <dbReference type="UniProtKB" id="Q63262"/>
    </source>
</evidence>
<evidence type="ECO:0000255" key="4">
    <source>
        <dbReference type="PROSITE-ProRule" id="PRU00108"/>
    </source>
</evidence>
<evidence type="ECO:0000255" key="5">
    <source>
        <dbReference type="PROSITE-ProRule" id="PRU00530"/>
    </source>
</evidence>
<evidence type="ECO:0000305" key="6"/>
<comment type="function">
    <text evidence="2 3">Transcription factor that acts synergistically with SOX11 and SOX4. Plays a role in neuronal development. Is implicated in an enhancer activity at the embryonic met-mesencephalic junction; the enhancer element contains the octamer motif (5'-ATTTGCAT-3') (By similarity).</text>
</comment>
<comment type="subunit">
    <text evidence="1">Homodimer.</text>
</comment>
<comment type="subcellular location">
    <subcellularLocation>
        <location evidence="4 5">Nucleus</location>
    </subcellularLocation>
</comment>
<comment type="tissue specificity">
    <text>Brain.</text>
</comment>
<comment type="similarity">
    <text evidence="6">Belongs to the POU transcription factor family. Class-3 subfamily.</text>
</comment>
<sequence length="131" mass="14724">FTQRRMKLGFTQADVGLALGTLYGNVFSQTTICRFEALQLSFKNMCKLKPLLNKWLEEADSSTGSPTSIDKIAAQGRKRKKRTSIEVSVKGALESHFLKCPKPSAQEITNLADSLQLEKEVVRVWFCNNLQ</sequence>
<protein>
    <recommendedName>
        <fullName>POU domain, class 3, transcription factor 3</fullName>
    </recommendedName>
    <alternativeName>
        <fullName>Brain-specific homeobox/POU domain protein 1</fullName>
        <shortName>Brain-1</shortName>
        <shortName>Brn-1</shortName>
    </alternativeName>
</protein>
<proteinExistence type="evidence at transcript level"/>
<keyword id="KW-0217">Developmental protein</keyword>
<keyword id="KW-0238">DNA-binding</keyword>
<keyword id="KW-0371">Homeobox</keyword>
<keyword id="KW-0524">Neurogenesis</keyword>
<keyword id="KW-0539">Nucleus</keyword>
<keyword id="KW-1185">Reference proteome</keyword>
<keyword id="KW-0804">Transcription</keyword>
<keyword id="KW-0805">Transcription regulation</keyword>
<dbReference type="EMBL" id="L28764">
    <property type="protein sequence ID" value="AAA31106.1"/>
    <property type="molecule type" value="mRNA"/>
</dbReference>
<dbReference type="SMR" id="Q29087"/>
<dbReference type="STRING" id="9823.ENSSSCP00000026394"/>
<dbReference type="PaxDb" id="9823-ENSSSCP00000026394"/>
<dbReference type="eggNOG" id="KOG3802">
    <property type="taxonomic scope" value="Eukaryota"/>
</dbReference>
<dbReference type="InParanoid" id="Q29087"/>
<dbReference type="Proteomes" id="UP000008227">
    <property type="component" value="Unplaced"/>
</dbReference>
<dbReference type="Proteomes" id="UP000314985">
    <property type="component" value="Unplaced"/>
</dbReference>
<dbReference type="Proteomes" id="UP000694570">
    <property type="component" value="Unplaced"/>
</dbReference>
<dbReference type="Proteomes" id="UP000694571">
    <property type="component" value="Unplaced"/>
</dbReference>
<dbReference type="Proteomes" id="UP000694720">
    <property type="component" value="Unplaced"/>
</dbReference>
<dbReference type="Proteomes" id="UP000694722">
    <property type="component" value="Unplaced"/>
</dbReference>
<dbReference type="Proteomes" id="UP000694723">
    <property type="component" value="Unplaced"/>
</dbReference>
<dbReference type="Proteomes" id="UP000694724">
    <property type="component" value="Unplaced"/>
</dbReference>
<dbReference type="Proteomes" id="UP000694725">
    <property type="component" value="Unplaced"/>
</dbReference>
<dbReference type="Proteomes" id="UP000694726">
    <property type="component" value="Unplaced"/>
</dbReference>
<dbReference type="Proteomes" id="UP000694727">
    <property type="component" value="Unplaced"/>
</dbReference>
<dbReference type="Proteomes" id="UP000694728">
    <property type="component" value="Unplaced"/>
</dbReference>
<dbReference type="GO" id="GO:0005634">
    <property type="term" value="C:nucleus"/>
    <property type="evidence" value="ECO:0000250"/>
    <property type="project" value="UniProtKB"/>
</dbReference>
<dbReference type="GO" id="GO:0003700">
    <property type="term" value="F:DNA-binding transcription factor activity"/>
    <property type="evidence" value="ECO:0007669"/>
    <property type="project" value="InterPro"/>
</dbReference>
<dbReference type="GO" id="GO:0042803">
    <property type="term" value="F:protein homodimerization activity"/>
    <property type="evidence" value="ECO:0000250"/>
    <property type="project" value="UniProtKB"/>
</dbReference>
<dbReference type="GO" id="GO:0043565">
    <property type="term" value="F:sequence-specific DNA binding"/>
    <property type="evidence" value="ECO:0000250"/>
    <property type="project" value="UniProtKB"/>
</dbReference>
<dbReference type="GO" id="GO:0072218">
    <property type="term" value="P:metanephric ascending thin limb development"/>
    <property type="evidence" value="ECO:0000250"/>
    <property type="project" value="UniProtKB"/>
</dbReference>
<dbReference type="GO" id="GO:0072240">
    <property type="term" value="P:metanephric DCT cell differentiation"/>
    <property type="evidence" value="ECO:0000250"/>
    <property type="project" value="UniProtKB"/>
</dbReference>
<dbReference type="GO" id="GO:0072236">
    <property type="term" value="P:metanephric loop of Henle development"/>
    <property type="evidence" value="ECO:0000250"/>
    <property type="project" value="UniProtKB"/>
</dbReference>
<dbReference type="GO" id="GO:0072227">
    <property type="term" value="P:metanephric macula densa development"/>
    <property type="evidence" value="ECO:0000250"/>
    <property type="project" value="UniProtKB"/>
</dbReference>
<dbReference type="GO" id="GO:0072233">
    <property type="term" value="P:metanephric thick ascending limb development"/>
    <property type="evidence" value="ECO:0000250"/>
    <property type="project" value="UniProtKB"/>
</dbReference>
<dbReference type="GO" id="GO:0043066">
    <property type="term" value="P:negative regulation of apoptotic process"/>
    <property type="evidence" value="ECO:0000250"/>
    <property type="project" value="UniProtKB"/>
</dbReference>
<dbReference type="GO" id="GO:0045892">
    <property type="term" value="P:negative regulation of DNA-templated transcription"/>
    <property type="evidence" value="ECO:0000250"/>
    <property type="project" value="UniProtKB"/>
</dbReference>
<dbReference type="GO" id="GO:0007399">
    <property type="term" value="P:nervous system development"/>
    <property type="evidence" value="ECO:0007669"/>
    <property type="project" value="UniProtKB-KW"/>
</dbReference>
<dbReference type="GO" id="GO:0008284">
    <property type="term" value="P:positive regulation of cell population proliferation"/>
    <property type="evidence" value="ECO:0000250"/>
    <property type="project" value="UniProtKB"/>
</dbReference>
<dbReference type="GO" id="GO:0045893">
    <property type="term" value="P:positive regulation of DNA-templated transcription"/>
    <property type="evidence" value="ECO:0000250"/>
    <property type="project" value="UniProtKB"/>
</dbReference>
<dbReference type="GO" id="GO:0010628">
    <property type="term" value="P:positive regulation of gene expression"/>
    <property type="evidence" value="ECO:0000250"/>
    <property type="project" value="UniProtKB"/>
</dbReference>
<dbReference type="CDD" id="cd00086">
    <property type="entry name" value="homeodomain"/>
    <property type="match status" value="1"/>
</dbReference>
<dbReference type="FunFam" id="1.10.10.60:FF:000005">
    <property type="entry name" value="POU domain protein"/>
    <property type="match status" value="1"/>
</dbReference>
<dbReference type="FunFam" id="1.10.260.40:FF:000001">
    <property type="entry name" value="POU domain protein"/>
    <property type="match status" value="1"/>
</dbReference>
<dbReference type="Gene3D" id="1.10.10.60">
    <property type="entry name" value="Homeodomain-like"/>
    <property type="match status" value="1"/>
</dbReference>
<dbReference type="Gene3D" id="1.10.260.40">
    <property type="entry name" value="lambda repressor-like DNA-binding domains"/>
    <property type="match status" value="1"/>
</dbReference>
<dbReference type="InterPro" id="IPR001356">
    <property type="entry name" value="HD"/>
</dbReference>
<dbReference type="InterPro" id="IPR009057">
    <property type="entry name" value="Homeodomain-like_sf"/>
</dbReference>
<dbReference type="InterPro" id="IPR010982">
    <property type="entry name" value="Lambda_DNA-bd_dom_sf"/>
</dbReference>
<dbReference type="InterPro" id="IPR013847">
    <property type="entry name" value="POU"/>
</dbReference>
<dbReference type="InterPro" id="IPR000327">
    <property type="entry name" value="POU_dom"/>
</dbReference>
<dbReference type="InterPro" id="IPR050255">
    <property type="entry name" value="POU_domain_TF"/>
</dbReference>
<dbReference type="PANTHER" id="PTHR11636">
    <property type="entry name" value="POU DOMAIN"/>
    <property type="match status" value="1"/>
</dbReference>
<dbReference type="PANTHER" id="PTHR11636:SF125">
    <property type="entry name" value="POU DOMAIN, CLASS 3, TRANSCRIPTION FACTOR 3"/>
    <property type="match status" value="1"/>
</dbReference>
<dbReference type="Pfam" id="PF00046">
    <property type="entry name" value="Homeodomain"/>
    <property type="match status" value="1"/>
</dbReference>
<dbReference type="Pfam" id="PF00157">
    <property type="entry name" value="Pou"/>
    <property type="match status" value="1"/>
</dbReference>
<dbReference type="PRINTS" id="PR00028">
    <property type="entry name" value="POUDOMAIN"/>
</dbReference>
<dbReference type="SMART" id="SM00389">
    <property type="entry name" value="HOX"/>
    <property type="match status" value="1"/>
</dbReference>
<dbReference type="SMART" id="SM00352">
    <property type="entry name" value="POU"/>
    <property type="match status" value="1"/>
</dbReference>
<dbReference type="SUPFAM" id="SSF46689">
    <property type="entry name" value="Homeodomain-like"/>
    <property type="match status" value="1"/>
</dbReference>
<dbReference type="SUPFAM" id="SSF47413">
    <property type="entry name" value="lambda repressor-like DNA-binding domains"/>
    <property type="match status" value="1"/>
</dbReference>
<dbReference type="PROSITE" id="PS50071">
    <property type="entry name" value="HOMEOBOX_2"/>
    <property type="match status" value="1"/>
</dbReference>
<dbReference type="PROSITE" id="PS00035">
    <property type="entry name" value="POU_1"/>
    <property type="match status" value="1"/>
</dbReference>
<dbReference type="PROSITE" id="PS00465">
    <property type="entry name" value="POU_2"/>
    <property type="match status" value="1"/>
</dbReference>
<dbReference type="PROSITE" id="PS51179">
    <property type="entry name" value="POU_3"/>
    <property type="match status" value="1"/>
</dbReference>
<organism>
    <name type="scientific">Sus scrofa</name>
    <name type="common">Pig</name>
    <dbReference type="NCBI Taxonomy" id="9823"/>
    <lineage>
        <taxon>Eukaryota</taxon>
        <taxon>Metazoa</taxon>
        <taxon>Chordata</taxon>
        <taxon>Craniata</taxon>
        <taxon>Vertebrata</taxon>
        <taxon>Euteleostomi</taxon>
        <taxon>Mammalia</taxon>
        <taxon>Eutheria</taxon>
        <taxon>Laurasiatheria</taxon>
        <taxon>Artiodactyla</taxon>
        <taxon>Suina</taxon>
        <taxon>Suidae</taxon>
        <taxon>Sus</taxon>
    </lineage>
</organism>
<feature type="chain" id="PRO_0000100729" description="POU domain, class 3, transcription factor 3">
    <location>
        <begin position="1" status="less than"/>
        <end position="131" status="greater than"/>
    </location>
</feature>
<feature type="domain" description="POU-specific" evidence="5">
    <location>
        <begin position="1" status="less than"/>
        <end position="60"/>
    </location>
</feature>
<feature type="DNA-binding region" description="Homeobox" evidence="4">
    <location>
        <begin position="78"/>
        <end position="131" status="greater than"/>
    </location>
</feature>
<feature type="non-terminal residue">
    <location>
        <position position="1"/>
    </location>
</feature>
<feature type="non-terminal residue">
    <location>
        <position position="131"/>
    </location>
</feature>